<gene>
    <name type="primary">lin54</name>
</gene>
<accession>Q0IHV2</accession>
<keyword id="KW-0010">Activator</keyword>
<keyword id="KW-0131">Cell cycle</keyword>
<keyword id="KW-0238">DNA-binding</keyword>
<keyword id="KW-0479">Metal-binding</keyword>
<keyword id="KW-0539">Nucleus</keyword>
<keyword id="KW-1185">Reference proteome</keyword>
<keyword id="KW-0678">Repressor</keyword>
<keyword id="KW-0804">Transcription</keyword>
<keyword id="KW-0805">Transcription regulation</keyword>
<keyword id="KW-0862">Zinc</keyword>
<name>LIN54_XENTR</name>
<comment type="function">
    <text evidence="2">Component of the DREAM complex, a multiprotein complex that can both act as a transcription activator or repressor depending on the context. Specifically recognizes the consensus motif 5'-TTYRAA-3' in target DNA.</text>
</comment>
<comment type="subunit">
    <text evidence="1">Component of the DREAM complex.</text>
</comment>
<comment type="subcellular location">
    <subcellularLocation>
        <location evidence="1">Nucleus</location>
    </subcellularLocation>
</comment>
<comment type="domain">
    <text evidence="2">The CRC domain mediates DNA-binding. It contains two CXC subdomains (joined by a flexible linker) which are both required for efficient association with target DNA. Each CXC subdomain coordinates three Zn(2+) ions.</text>
</comment>
<comment type="similarity">
    <text evidence="4">Belongs to the lin-54 family.</text>
</comment>
<proteinExistence type="evidence at transcript level"/>
<feature type="chain" id="PRO_0000341394" description="Protein lin-54 homolog">
    <location>
        <begin position="1"/>
        <end position="741"/>
    </location>
</feature>
<feature type="domain" description="CRC" evidence="3">
    <location>
        <begin position="513"/>
        <end position="626"/>
    </location>
</feature>
<feature type="region of interest" description="DNA-binding" evidence="2">
    <location>
        <begin position="515"/>
        <end position="528"/>
    </location>
</feature>
<feature type="region of interest" description="Linker" evidence="2">
    <location>
        <begin position="575"/>
        <end position="588"/>
    </location>
</feature>
<feature type="region of interest" description="DNA-binding" evidence="2">
    <location>
        <begin position="591"/>
        <end position="604"/>
    </location>
</feature>
<feature type="binding site" evidence="2">
    <location>
        <position position="517"/>
    </location>
    <ligand>
        <name>Zn(2+)</name>
        <dbReference type="ChEBI" id="CHEBI:29105"/>
        <label>1</label>
    </ligand>
</feature>
<feature type="binding site" evidence="2">
    <location>
        <position position="517"/>
    </location>
    <ligand>
        <name>Zn(2+)</name>
        <dbReference type="ChEBI" id="CHEBI:29105"/>
        <label>2</label>
    </ligand>
</feature>
<feature type="binding site" evidence="2">
    <location>
        <position position="519"/>
    </location>
    <ligand>
        <name>Zn(2+)</name>
        <dbReference type="ChEBI" id="CHEBI:29105"/>
        <label>1</label>
    </ligand>
</feature>
<feature type="binding site" evidence="2">
    <location>
        <position position="524"/>
    </location>
    <ligand>
        <name>Zn(2+)</name>
        <dbReference type="ChEBI" id="CHEBI:29105"/>
        <label>1</label>
    </ligand>
</feature>
<feature type="binding site" evidence="2">
    <location>
        <position position="524"/>
    </location>
    <ligand>
        <name>Zn(2+)</name>
        <dbReference type="ChEBI" id="CHEBI:29105"/>
        <label>3</label>
    </ligand>
</feature>
<feature type="binding site" evidence="2">
    <location>
        <position position="529"/>
    </location>
    <ligand>
        <name>Zn(2+)</name>
        <dbReference type="ChEBI" id="CHEBI:29105"/>
        <label>1</label>
    </ligand>
</feature>
<feature type="binding site" evidence="2">
    <location>
        <position position="531"/>
    </location>
    <ligand>
        <name>Zn(2+)</name>
        <dbReference type="ChEBI" id="CHEBI:29105"/>
        <label>2</label>
    </ligand>
</feature>
<feature type="binding site" evidence="2">
    <location>
        <position position="538"/>
    </location>
    <ligand>
        <name>Zn(2+)</name>
        <dbReference type="ChEBI" id="CHEBI:29105"/>
        <label>2</label>
    </ligand>
</feature>
<feature type="binding site" evidence="2">
    <location>
        <position position="538"/>
    </location>
    <ligand>
        <name>Zn(2+)</name>
        <dbReference type="ChEBI" id="CHEBI:29105"/>
        <label>3</label>
    </ligand>
</feature>
<feature type="binding site" evidence="2">
    <location>
        <position position="541"/>
    </location>
    <ligand>
        <name>Zn(2+)</name>
        <dbReference type="ChEBI" id="CHEBI:29105"/>
        <label>2</label>
    </ligand>
</feature>
<feature type="binding site" evidence="2">
    <location>
        <position position="543"/>
    </location>
    <ligand>
        <name>Zn(2+)</name>
        <dbReference type="ChEBI" id="CHEBI:29105"/>
        <label>3</label>
    </ligand>
</feature>
<feature type="binding site" evidence="2">
    <location>
        <position position="546"/>
    </location>
    <ligand>
        <name>Zn(2+)</name>
        <dbReference type="ChEBI" id="CHEBI:29105"/>
        <label>3</label>
    </ligand>
</feature>
<feature type="binding site" evidence="2">
    <location>
        <position position="591"/>
    </location>
    <ligand>
        <name>Zn(2+)</name>
        <dbReference type="ChEBI" id="CHEBI:29105"/>
        <label>4</label>
    </ligand>
</feature>
<feature type="binding site" evidence="2">
    <location>
        <position position="591"/>
    </location>
    <ligand>
        <name>Zn(2+)</name>
        <dbReference type="ChEBI" id="CHEBI:29105"/>
        <label>5</label>
    </ligand>
</feature>
<feature type="binding site" evidence="2">
    <location>
        <position position="593"/>
    </location>
    <ligand>
        <name>Zn(2+)</name>
        <dbReference type="ChEBI" id="CHEBI:29105"/>
        <label>4</label>
    </ligand>
</feature>
<feature type="binding site" evidence="2">
    <location>
        <position position="598"/>
    </location>
    <ligand>
        <name>Zn(2+)</name>
        <dbReference type="ChEBI" id="CHEBI:29105"/>
        <label>4</label>
    </ligand>
</feature>
<feature type="binding site" evidence="2">
    <location>
        <position position="598"/>
    </location>
    <ligand>
        <name>Zn(2+)</name>
        <dbReference type="ChEBI" id="CHEBI:29105"/>
        <label>6</label>
    </ligand>
</feature>
<feature type="binding site" evidence="2">
    <location>
        <position position="603"/>
    </location>
    <ligand>
        <name>Zn(2+)</name>
        <dbReference type="ChEBI" id="CHEBI:29105"/>
        <label>4</label>
    </ligand>
</feature>
<feature type="binding site" evidence="2">
    <location>
        <position position="605"/>
    </location>
    <ligand>
        <name>Zn(2+)</name>
        <dbReference type="ChEBI" id="CHEBI:29105"/>
        <label>5</label>
    </ligand>
</feature>
<feature type="binding site" evidence="2">
    <location>
        <position position="612"/>
    </location>
    <ligand>
        <name>Zn(2+)</name>
        <dbReference type="ChEBI" id="CHEBI:29105"/>
        <label>5</label>
    </ligand>
</feature>
<feature type="binding site" evidence="2">
    <location>
        <position position="612"/>
    </location>
    <ligand>
        <name>Zn(2+)</name>
        <dbReference type="ChEBI" id="CHEBI:29105"/>
        <label>6</label>
    </ligand>
</feature>
<feature type="binding site" evidence="2">
    <location>
        <position position="616"/>
    </location>
    <ligand>
        <name>Zn(2+)</name>
        <dbReference type="ChEBI" id="CHEBI:29105"/>
        <label>5</label>
    </ligand>
</feature>
<feature type="binding site" evidence="2">
    <location>
        <position position="618"/>
    </location>
    <ligand>
        <name>Zn(2+)</name>
        <dbReference type="ChEBI" id="CHEBI:29105"/>
        <label>6</label>
    </ligand>
</feature>
<feature type="binding site" evidence="2">
    <location>
        <position position="621"/>
    </location>
    <ligand>
        <name>Zn(2+)</name>
        <dbReference type="ChEBI" id="CHEBI:29105"/>
        <label>6</label>
    </ligand>
</feature>
<feature type="site" description="Critical for interaction with target DNA" evidence="2">
    <location>
        <position position="528"/>
    </location>
</feature>
<feature type="site" description="Interaction with DNA" evidence="2">
    <location>
        <position position="566"/>
    </location>
</feature>
<feature type="site" description="Critical for interaction with target DNA" evidence="2">
    <location>
        <position position="602"/>
    </location>
</feature>
<evidence type="ECO:0000250" key="1"/>
<evidence type="ECO:0000250" key="2">
    <source>
        <dbReference type="UniProtKB" id="Q6MZP7"/>
    </source>
</evidence>
<evidence type="ECO:0000255" key="3">
    <source>
        <dbReference type="PROSITE-ProRule" id="PRU00971"/>
    </source>
</evidence>
<evidence type="ECO:0000305" key="4"/>
<dbReference type="EMBL" id="BC122957">
    <property type="protein sequence ID" value="AAI22958.1"/>
    <property type="molecule type" value="mRNA"/>
</dbReference>
<dbReference type="RefSeq" id="NP_001072590.1">
    <property type="nucleotide sequence ID" value="NM_001079122.1"/>
</dbReference>
<dbReference type="RefSeq" id="XP_012821023.1">
    <property type="nucleotide sequence ID" value="XM_012965569.3"/>
</dbReference>
<dbReference type="RefSeq" id="XP_012821025.1">
    <property type="nucleotide sequence ID" value="XM_012965571.3"/>
</dbReference>
<dbReference type="RefSeq" id="XP_017950024.1">
    <property type="nucleotide sequence ID" value="XM_018094535.1"/>
</dbReference>
<dbReference type="RefSeq" id="XP_031757689.1">
    <property type="nucleotide sequence ID" value="XM_031901829.1"/>
</dbReference>
<dbReference type="RefSeq" id="XP_031757694.1">
    <property type="nucleotide sequence ID" value="XM_031901834.1"/>
</dbReference>
<dbReference type="RefSeq" id="XP_031757699.1">
    <property type="nucleotide sequence ID" value="XM_031901839.1"/>
</dbReference>
<dbReference type="SMR" id="Q0IHV2"/>
<dbReference type="FunCoup" id="Q0IHV2">
    <property type="interactions" value="3575"/>
</dbReference>
<dbReference type="STRING" id="8364.ENSXETP00000041693"/>
<dbReference type="PaxDb" id="8364-ENSXETP00000000785"/>
<dbReference type="DNASU" id="780045"/>
<dbReference type="GeneID" id="780045"/>
<dbReference type="KEGG" id="xtr:780045"/>
<dbReference type="AGR" id="Xenbase:XB-GENE-5752559"/>
<dbReference type="CTD" id="132660"/>
<dbReference type="Xenbase" id="XB-GENE-5752559">
    <property type="gene designation" value="lin54"/>
</dbReference>
<dbReference type="eggNOG" id="KOG1171">
    <property type="taxonomic scope" value="Eukaryota"/>
</dbReference>
<dbReference type="HOGENOM" id="CLU_024128_0_0_1"/>
<dbReference type="InParanoid" id="Q0IHV2"/>
<dbReference type="OrthoDB" id="6283463at2759"/>
<dbReference type="TreeFam" id="TF313189"/>
<dbReference type="Reactome" id="R-XTR-1538133">
    <property type="pathway name" value="G0 and Early G1"/>
</dbReference>
<dbReference type="Proteomes" id="UP000008143">
    <property type="component" value="Chromosome 1"/>
</dbReference>
<dbReference type="Bgee" id="ENSXETG00000000369">
    <property type="expression patterns" value="Expressed in ovary and 13 other cell types or tissues"/>
</dbReference>
<dbReference type="GO" id="GO:0005634">
    <property type="term" value="C:nucleus"/>
    <property type="evidence" value="ECO:0007669"/>
    <property type="project" value="UniProtKB-SubCell"/>
</dbReference>
<dbReference type="GO" id="GO:0003677">
    <property type="term" value="F:DNA binding"/>
    <property type="evidence" value="ECO:0007669"/>
    <property type="project" value="UniProtKB-KW"/>
</dbReference>
<dbReference type="GO" id="GO:0046872">
    <property type="term" value="F:metal ion binding"/>
    <property type="evidence" value="ECO:0007669"/>
    <property type="project" value="UniProtKB-KW"/>
</dbReference>
<dbReference type="InterPro" id="IPR005172">
    <property type="entry name" value="CRC"/>
</dbReference>
<dbReference type="InterPro" id="IPR028307">
    <property type="entry name" value="Lin-54_fam"/>
</dbReference>
<dbReference type="InterPro" id="IPR033467">
    <property type="entry name" value="Tesmin/TSO1-like_CXC"/>
</dbReference>
<dbReference type="PANTHER" id="PTHR12446:SF36">
    <property type="entry name" value="PROTEIN LIN-54 HOMOLOG"/>
    <property type="match status" value="1"/>
</dbReference>
<dbReference type="PANTHER" id="PTHR12446">
    <property type="entry name" value="TESMIN/TSO1-RELATED"/>
    <property type="match status" value="1"/>
</dbReference>
<dbReference type="Pfam" id="PF03638">
    <property type="entry name" value="TCR"/>
    <property type="match status" value="2"/>
</dbReference>
<dbReference type="SMART" id="SM01114">
    <property type="entry name" value="CXC"/>
    <property type="match status" value="2"/>
</dbReference>
<dbReference type="PROSITE" id="PS51634">
    <property type="entry name" value="CRC"/>
    <property type="match status" value="1"/>
</dbReference>
<reference key="1">
    <citation type="submission" date="2006-09" db="EMBL/GenBank/DDBJ databases">
        <authorList>
            <consortium name="NIH - Xenopus Gene Collection (XGC) project"/>
        </authorList>
    </citation>
    <scope>NUCLEOTIDE SEQUENCE [LARGE SCALE MRNA]</scope>
    <source>
        <tissue>Brain</tissue>
    </source>
</reference>
<organism>
    <name type="scientific">Xenopus tropicalis</name>
    <name type="common">Western clawed frog</name>
    <name type="synonym">Silurana tropicalis</name>
    <dbReference type="NCBI Taxonomy" id="8364"/>
    <lineage>
        <taxon>Eukaryota</taxon>
        <taxon>Metazoa</taxon>
        <taxon>Chordata</taxon>
        <taxon>Craniata</taxon>
        <taxon>Vertebrata</taxon>
        <taxon>Euteleostomi</taxon>
        <taxon>Amphibia</taxon>
        <taxon>Batrachia</taxon>
        <taxon>Anura</taxon>
        <taxon>Pipoidea</taxon>
        <taxon>Pipidae</taxon>
        <taxon>Xenopodinae</taxon>
        <taxon>Xenopus</taxon>
        <taxon>Silurana</taxon>
    </lineage>
</organism>
<protein>
    <recommendedName>
        <fullName>Protein lin-54 homolog</fullName>
    </recommendedName>
</protein>
<sequence length="741" mass="78222">MDVVSTDVNNVLPDEIMETGISLVDDDSIEAITISSPMVDEAPMETELERIVEVSSSGECVSTAVVKEAVASTSNNAGHLAVVSVASKPESGPSAAAMKTVLQTHFHKLATPISGQVVLNKVSQASDLTAGSHVVKQEGQKLIVTTLGKSSHPIVLTLPQSHIGNAQTPVTHVQRIESKVTPQQIKLVTIGGNRSDGNPVLGMSALTSAQIISPSTKSPVLQTQQIKTLQIAKKAPTSSGPVITKLIIAKPLNSKPLTEQTTQIASSFAGGPALSQTNPGTPPKALNIADIGVIGTPSAKTTNKIAISPLKSPSKGVKSSVGGINTPQFKTIIPLAAAPNVQQIQVPGSKFHYVRLVTASTASNTTPSSQIQSTSTQPLQQAKPVVVNATPVRMSVPIIPAQTVKQVVPKPLNAASQIVTTSQPQQRLLMPATPLAQIQPSLTNLPAGTVLASAPGTGNVGYAVLPAQYVTQLQQSSYVSIASNAGLSGTTAAQNQPRGPLNGIISSESASRPRKPCNCTKSLCLKLYCDCFANGEFCNNCNCTNCYNNLEHENERQKAIKACLDRNPEAFKPKIGKGKEGESDRRHSKGCNCKRSGCLKNYCECYEAKIMCSSICKCIGCKNFEESPERKTLMHLADAAEVRVQQQTAAKTKLSSQISDLLTRPAPPMNSGGGKLPFTFVTKEVAEATCECLLAQAEQAEKQLKSKAATERMILEEFGRCLMRVINSAGKAKTDPCPMSC</sequence>